<reference evidence="6 7" key="1">
    <citation type="journal article" date="2018" name="PLoS ONE">
        <title>Proteomic endorsed transcriptomic profiles of venom glands from Tityus obscurus and T. serrulatus scorpions.</title>
        <authorList>
            <person name="de Oliveira U.C."/>
            <person name="Nishiyama M.Y. Jr."/>
            <person name="Dos Santos M.B.V."/>
            <person name="Santos-da-Silva A.P."/>
            <person name="Chalkidis H.M."/>
            <person name="Souza-Imberg A."/>
            <person name="Candido D.M."/>
            <person name="Yamanouye N."/>
            <person name="Dorce V.A.C."/>
            <person name="Junqueira-de-Azevedo I.L.M."/>
        </authorList>
    </citation>
    <scope>NUCLEOTIDE SEQUENCE [MRNA]</scope>
    <source>
        <tissue>Telson</tissue>
    </source>
</reference>
<sequence>MKAFYGILIIFILISMLDLSQQVFINAKCRGSPQCLPKCKEAIGKAAGKCMNGKCKCYP</sequence>
<keyword id="KW-1015">Disulfide bond</keyword>
<keyword id="KW-0872">Ion channel impairing toxin</keyword>
<keyword id="KW-0528">Neurotoxin</keyword>
<keyword id="KW-0632">Potassium channel impairing toxin</keyword>
<keyword id="KW-0964">Secreted</keyword>
<keyword id="KW-0732">Signal</keyword>
<keyword id="KW-0800">Toxin</keyword>
<keyword id="KW-1220">Voltage-gated potassium channel impairing toxin</keyword>
<accession>A0A218QXG2</accession>
<name>KTX23_TITSE</name>
<dbReference type="EMBL" id="GEUW01000051">
    <property type="protein sequence ID" value="JAW06994.1"/>
    <property type="molecule type" value="mRNA"/>
</dbReference>
<dbReference type="EMBL" id="GEUW01000008">
    <property type="protein sequence ID" value="JAW07037.1"/>
    <property type="molecule type" value="mRNA"/>
</dbReference>
<dbReference type="SMR" id="A0A218QXG2"/>
<dbReference type="GO" id="GO:0005576">
    <property type="term" value="C:extracellular region"/>
    <property type="evidence" value="ECO:0007669"/>
    <property type="project" value="UniProtKB-SubCell"/>
</dbReference>
<dbReference type="GO" id="GO:0008200">
    <property type="term" value="F:ion channel inhibitor activity"/>
    <property type="evidence" value="ECO:0007669"/>
    <property type="project" value="InterPro"/>
</dbReference>
<dbReference type="GO" id="GO:0015459">
    <property type="term" value="F:potassium channel regulator activity"/>
    <property type="evidence" value="ECO:0007669"/>
    <property type="project" value="UniProtKB-KW"/>
</dbReference>
<dbReference type="GO" id="GO:0090729">
    <property type="term" value="F:toxin activity"/>
    <property type="evidence" value="ECO:0007669"/>
    <property type="project" value="UniProtKB-KW"/>
</dbReference>
<dbReference type="FunFam" id="3.30.30.10:FF:000009">
    <property type="entry name" value="Potassium channel toxin alpha-KTx 4.3"/>
    <property type="match status" value="1"/>
</dbReference>
<dbReference type="Gene3D" id="3.30.30.10">
    <property type="entry name" value="Knottin, scorpion toxin-like"/>
    <property type="match status" value="1"/>
</dbReference>
<dbReference type="InterPro" id="IPR036574">
    <property type="entry name" value="Scorpion_toxin-like_sf"/>
</dbReference>
<dbReference type="InterPro" id="IPR001947">
    <property type="entry name" value="Scorpion_toxinS_K_inh"/>
</dbReference>
<dbReference type="Pfam" id="PF00451">
    <property type="entry name" value="Toxin_2"/>
    <property type="match status" value="1"/>
</dbReference>
<dbReference type="PRINTS" id="PR00286">
    <property type="entry name" value="CHARYBDTOXIN"/>
</dbReference>
<dbReference type="SUPFAM" id="SSF57095">
    <property type="entry name" value="Scorpion toxin-like"/>
    <property type="match status" value="1"/>
</dbReference>
<dbReference type="PROSITE" id="PS01138">
    <property type="entry name" value="SCORP_SHORT_TOXIN"/>
    <property type="match status" value="1"/>
</dbReference>
<protein>
    <recommendedName>
        <fullName evidence="4">Putative potassium channel toxin Ts23</fullName>
    </recommendedName>
    <alternativeName>
        <fullName evidence="4">Putative KTx</fullName>
    </alternativeName>
    <alternativeName>
        <fullName evidence="4">Tityustoxin-23</fullName>
    </alternativeName>
</protein>
<evidence type="ECO:0000250" key="1">
    <source>
        <dbReference type="UniProtKB" id="O46028"/>
    </source>
</evidence>
<evidence type="ECO:0000250" key="2">
    <source>
        <dbReference type="UniProtKB" id="P46114"/>
    </source>
</evidence>
<evidence type="ECO:0000255" key="3"/>
<evidence type="ECO:0000305" key="4"/>
<evidence type="ECO:0000305" key="5">
    <source>
    </source>
</evidence>
<evidence type="ECO:0000312" key="6">
    <source>
        <dbReference type="EMBL" id="JAW06994.1"/>
    </source>
</evidence>
<evidence type="ECO:0000312" key="7">
    <source>
        <dbReference type="EMBL" id="JAW07037.1"/>
    </source>
</evidence>
<organism>
    <name type="scientific">Tityus serrulatus</name>
    <name type="common">Brazilian scorpion</name>
    <dbReference type="NCBI Taxonomy" id="6887"/>
    <lineage>
        <taxon>Eukaryota</taxon>
        <taxon>Metazoa</taxon>
        <taxon>Ecdysozoa</taxon>
        <taxon>Arthropoda</taxon>
        <taxon>Chelicerata</taxon>
        <taxon>Arachnida</taxon>
        <taxon>Scorpiones</taxon>
        <taxon>Buthida</taxon>
        <taxon>Buthoidea</taxon>
        <taxon>Buthidae</taxon>
        <taxon>Tityus</taxon>
    </lineage>
</organism>
<feature type="signal peptide" evidence="3">
    <location>
        <begin position="1"/>
        <end position="22"/>
    </location>
</feature>
<feature type="chain" id="PRO_5011910071" description="Putative potassium channel toxin Ts23">
    <location>
        <begin position="23"/>
        <end position="59"/>
    </location>
</feature>
<feature type="site" description="Basic residue of the functional dyad" evidence="1">
    <location>
        <position position="49"/>
    </location>
</feature>
<feature type="site" description="Aromatic residue of the functional dyad" evidence="1">
    <location>
        <position position="58"/>
    </location>
</feature>
<feature type="disulfide bond" evidence="2">
    <location>
        <begin position="29"/>
        <end position="50"/>
    </location>
</feature>
<feature type="disulfide bond" evidence="2">
    <location>
        <begin position="35"/>
        <end position="55"/>
    </location>
</feature>
<feature type="disulfide bond" evidence="2">
    <location>
        <begin position="39"/>
        <end position="57"/>
    </location>
</feature>
<proteinExistence type="inferred from homology"/>
<comment type="function">
    <text evidence="2">Potently blocks Kv1.1/KCNA1 (85%), Kv1.2/KCNA2 (91%), Kv1.3/KCNA3 (89%), Kv1.6/KCNA6 (94%), and Shaker (97%).</text>
</comment>
<comment type="subcellular location">
    <subcellularLocation>
        <location evidence="5">Secreted</location>
    </subcellularLocation>
</comment>
<comment type="tissue specificity">
    <text evidence="5">Expressed by the venom gland.</text>
</comment>
<comment type="domain">
    <text evidence="2">Has the structural arrangement of an alpha-helix connected to a beta-sheet by disulfide bonds (CSalpha/beta).</text>
</comment>
<comment type="similarity">
    <text evidence="4">Belongs to the short scorpion toxin superfamily. Potassium channel inhibitor family. Alpha-KTx 04 subfamily.</text>
</comment>